<name>TAL_METJA</name>
<keyword id="KW-0963">Cytoplasm</keyword>
<keyword id="KW-0570">Pentose shunt</keyword>
<keyword id="KW-1185">Reference proteome</keyword>
<keyword id="KW-0704">Schiff base</keyword>
<keyword id="KW-0808">Transferase</keyword>
<comment type="function">
    <text evidence="1">Transaldolase is important for the balance of metabolites in the pentose-phosphate pathway.</text>
</comment>
<comment type="catalytic activity">
    <reaction>
        <text>D-sedoheptulose 7-phosphate + D-glyceraldehyde 3-phosphate = D-erythrose 4-phosphate + beta-D-fructose 6-phosphate</text>
        <dbReference type="Rhea" id="RHEA:17053"/>
        <dbReference type="ChEBI" id="CHEBI:16897"/>
        <dbReference type="ChEBI" id="CHEBI:57483"/>
        <dbReference type="ChEBI" id="CHEBI:57634"/>
        <dbReference type="ChEBI" id="CHEBI:59776"/>
        <dbReference type="EC" id="2.2.1.2"/>
    </reaction>
</comment>
<comment type="pathway">
    <text>Carbohydrate degradation; pentose phosphate pathway; D-glyceraldehyde 3-phosphate and beta-D-fructose 6-phosphate from D-ribose 5-phosphate and D-xylulose 5-phosphate (non-oxidative stage): step 2/3.</text>
</comment>
<comment type="subcellular location">
    <subcellularLocation>
        <location evidence="1">Cytoplasm</location>
    </subcellularLocation>
</comment>
<comment type="similarity">
    <text evidence="2">Belongs to the transaldolase family. Type 3B subfamily.</text>
</comment>
<proteinExistence type="inferred from homology"/>
<evidence type="ECO:0000250" key="1"/>
<evidence type="ECO:0000305" key="2"/>
<gene>
    <name type="primary">tal</name>
    <name type="ordered locus">MJ0960</name>
</gene>
<dbReference type="EC" id="2.2.1.2"/>
<dbReference type="EMBL" id="L77117">
    <property type="protein sequence ID" value="AAB98962.1"/>
    <property type="molecule type" value="Genomic_DNA"/>
</dbReference>
<dbReference type="PIR" id="H64419">
    <property type="entry name" value="H64419"/>
</dbReference>
<dbReference type="RefSeq" id="WP_010870474.1">
    <property type="nucleotide sequence ID" value="NC_000909.1"/>
</dbReference>
<dbReference type="SMR" id="Q58370"/>
<dbReference type="FunCoup" id="Q58370">
    <property type="interactions" value="243"/>
</dbReference>
<dbReference type="STRING" id="243232.MJ_0960"/>
<dbReference type="PaxDb" id="243232-MJ_0960"/>
<dbReference type="EnsemblBacteria" id="AAB98962">
    <property type="protein sequence ID" value="AAB98962"/>
    <property type="gene ID" value="MJ_0960"/>
</dbReference>
<dbReference type="GeneID" id="1451858"/>
<dbReference type="KEGG" id="mja:MJ_0960"/>
<dbReference type="eggNOG" id="arCOG05061">
    <property type="taxonomic scope" value="Archaea"/>
</dbReference>
<dbReference type="HOGENOM" id="CLU_079764_0_0_2"/>
<dbReference type="InParanoid" id="Q58370"/>
<dbReference type="OrthoDB" id="6661at2157"/>
<dbReference type="PhylomeDB" id="Q58370"/>
<dbReference type="UniPathway" id="UPA00115">
    <property type="reaction ID" value="UER00414"/>
</dbReference>
<dbReference type="Proteomes" id="UP000000805">
    <property type="component" value="Chromosome"/>
</dbReference>
<dbReference type="GO" id="GO:0005737">
    <property type="term" value="C:cytoplasm"/>
    <property type="evidence" value="ECO:0007669"/>
    <property type="project" value="UniProtKB-SubCell"/>
</dbReference>
<dbReference type="GO" id="GO:0016832">
    <property type="term" value="F:aldehyde-lyase activity"/>
    <property type="evidence" value="ECO:0007669"/>
    <property type="project" value="InterPro"/>
</dbReference>
<dbReference type="GO" id="GO:0004801">
    <property type="term" value="F:transaldolase activity"/>
    <property type="evidence" value="ECO:0007669"/>
    <property type="project" value="UniProtKB-UniRule"/>
</dbReference>
<dbReference type="GO" id="GO:0005975">
    <property type="term" value="P:carbohydrate metabolic process"/>
    <property type="evidence" value="ECO:0007669"/>
    <property type="project" value="InterPro"/>
</dbReference>
<dbReference type="GO" id="GO:0006098">
    <property type="term" value="P:pentose-phosphate shunt"/>
    <property type="evidence" value="ECO:0007669"/>
    <property type="project" value="UniProtKB-UniRule"/>
</dbReference>
<dbReference type="CDD" id="cd00956">
    <property type="entry name" value="Transaldolase_FSA"/>
    <property type="match status" value="1"/>
</dbReference>
<dbReference type="FunFam" id="3.20.20.70:FF:000018">
    <property type="entry name" value="Probable transaldolase"/>
    <property type="match status" value="1"/>
</dbReference>
<dbReference type="Gene3D" id="3.20.20.70">
    <property type="entry name" value="Aldolase class I"/>
    <property type="match status" value="1"/>
</dbReference>
<dbReference type="HAMAP" id="MF_00494">
    <property type="entry name" value="Transaldolase_3b"/>
    <property type="match status" value="1"/>
</dbReference>
<dbReference type="InterPro" id="IPR013785">
    <property type="entry name" value="Aldolase_TIM"/>
</dbReference>
<dbReference type="InterPro" id="IPR001585">
    <property type="entry name" value="TAL/FSA"/>
</dbReference>
<dbReference type="InterPro" id="IPR022999">
    <property type="entry name" value="Transaldolase_3B"/>
</dbReference>
<dbReference type="InterPro" id="IPR004731">
    <property type="entry name" value="Transaldolase_3B/F6P_aldolase"/>
</dbReference>
<dbReference type="InterPro" id="IPR018225">
    <property type="entry name" value="Transaldolase_AS"/>
</dbReference>
<dbReference type="InterPro" id="IPR033919">
    <property type="entry name" value="TSA/FSA_arc/bac"/>
</dbReference>
<dbReference type="NCBIfam" id="TIGR00875">
    <property type="entry name" value="fsa_talC_mipB"/>
    <property type="match status" value="1"/>
</dbReference>
<dbReference type="PANTHER" id="PTHR10683:SF40">
    <property type="entry name" value="FRUCTOSE-6-PHOSPHATE ALDOLASE 1-RELATED"/>
    <property type="match status" value="1"/>
</dbReference>
<dbReference type="PANTHER" id="PTHR10683">
    <property type="entry name" value="TRANSALDOLASE"/>
    <property type="match status" value="1"/>
</dbReference>
<dbReference type="Pfam" id="PF00923">
    <property type="entry name" value="TAL_FSA"/>
    <property type="match status" value="1"/>
</dbReference>
<dbReference type="SUPFAM" id="SSF51569">
    <property type="entry name" value="Aldolase"/>
    <property type="match status" value="1"/>
</dbReference>
<dbReference type="PROSITE" id="PS01054">
    <property type="entry name" value="TRANSALDOLASE_1"/>
    <property type="match status" value="1"/>
</dbReference>
<dbReference type="PROSITE" id="PS00958">
    <property type="entry name" value="TRANSALDOLASE_2"/>
    <property type="match status" value="1"/>
</dbReference>
<reference key="1">
    <citation type="journal article" date="1996" name="Science">
        <title>Complete genome sequence of the methanogenic archaeon, Methanococcus jannaschii.</title>
        <authorList>
            <person name="Bult C.J."/>
            <person name="White O."/>
            <person name="Olsen G.J."/>
            <person name="Zhou L."/>
            <person name="Fleischmann R.D."/>
            <person name="Sutton G.G."/>
            <person name="Blake J.A."/>
            <person name="FitzGerald L.M."/>
            <person name="Clayton R.A."/>
            <person name="Gocayne J.D."/>
            <person name="Kerlavage A.R."/>
            <person name="Dougherty B.A."/>
            <person name="Tomb J.-F."/>
            <person name="Adams M.D."/>
            <person name="Reich C.I."/>
            <person name="Overbeek R."/>
            <person name="Kirkness E.F."/>
            <person name="Weinstock K.G."/>
            <person name="Merrick J.M."/>
            <person name="Glodek A."/>
            <person name="Scott J.L."/>
            <person name="Geoghagen N.S.M."/>
            <person name="Weidman J.F."/>
            <person name="Fuhrmann J.L."/>
            <person name="Nguyen D."/>
            <person name="Utterback T.R."/>
            <person name="Kelley J.M."/>
            <person name="Peterson J.D."/>
            <person name="Sadow P.W."/>
            <person name="Hanna M.C."/>
            <person name="Cotton M.D."/>
            <person name="Roberts K.M."/>
            <person name="Hurst M.A."/>
            <person name="Kaine B.P."/>
            <person name="Borodovsky M."/>
            <person name="Klenk H.-P."/>
            <person name="Fraser C.M."/>
            <person name="Smith H.O."/>
            <person name="Woese C.R."/>
            <person name="Venter J.C."/>
        </authorList>
    </citation>
    <scope>NUCLEOTIDE SEQUENCE [LARGE SCALE GENOMIC DNA]</scope>
    <source>
        <strain>ATCC 43067 / DSM 2661 / JAL-1 / JCM 10045 / NBRC 100440</strain>
    </source>
</reference>
<feature type="chain" id="PRO_0000173689" description="Probable transaldolase">
    <location>
        <begin position="1"/>
        <end position="217"/>
    </location>
</feature>
<feature type="active site" description="Schiff-base intermediate with substrate" evidence="1">
    <location>
        <position position="83"/>
    </location>
</feature>
<organism>
    <name type="scientific">Methanocaldococcus jannaschii (strain ATCC 43067 / DSM 2661 / JAL-1 / JCM 10045 / NBRC 100440)</name>
    <name type="common">Methanococcus jannaschii</name>
    <dbReference type="NCBI Taxonomy" id="243232"/>
    <lineage>
        <taxon>Archaea</taxon>
        <taxon>Methanobacteriati</taxon>
        <taxon>Methanobacteriota</taxon>
        <taxon>Methanomada group</taxon>
        <taxon>Methanococci</taxon>
        <taxon>Methanococcales</taxon>
        <taxon>Methanocaldococcaceae</taxon>
        <taxon>Methanocaldococcus</taxon>
    </lineage>
</organism>
<protein>
    <recommendedName>
        <fullName>Probable transaldolase</fullName>
        <ecNumber>2.2.1.2</ecNumber>
    </recommendedName>
</protein>
<sequence length="217" mass="23960">MKFFLDTANVEEIKKYAELGLVDGVTTNPTLVAKEGRDFYEVVKEICEIVEGPVSAEVISTDAEGMVKEARELAKLADNIVIKIPMTKDGMKAVKILSAEGIKTNVTLVFSPLQALVAAKAGATYVSPFVGRLDDIGHVGMKLIEDVVKIYKNYDIKTEVIVASVRHPWHVLEAAKIGADIATMPPAVMDKLFNHPLTDIGLERFLKDWDEYLKSRK</sequence>
<accession>Q58370</accession>